<protein>
    <recommendedName>
        <fullName evidence="1">DNA-directed RNA polymerase subunit Rpo1C</fullName>
        <ecNumber evidence="1">2.7.7.6</ecNumber>
    </recommendedName>
    <alternativeName>
        <fullName evidence="1">DNA-directed RNA polymerase subunit A''</fullName>
    </alternativeName>
    <component>
        <recommendedName>
            <fullName>Mja rpo1C intein</fullName>
        </recommendedName>
        <alternativeName>
            <fullName>Mja rpoA'' intein</fullName>
        </alternativeName>
        <alternativeName>
            <fullName>Mja rpoA2 intein</fullName>
        </alternativeName>
    </component>
</protein>
<accession>Q58446</accession>
<keyword id="KW-0068">Autocatalytic cleavage</keyword>
<keyword id="KW-0963">Cytoplasm</keyword>
<keyword id="KW-0238">DNA-binding</keyword>
<keyword id="KW-0240">DNA-directed RNA polymerase</keyword>
<keyword id="KW-0255">Endonuclease</keyword>
<keyword id="KW-0378">Hydrolase</keyword>
<keyword id="KW-0404">Intron homing</keyword>
<keyword id="KW-0540">Nuclease</keyword>
<keyword id="KW-0548">Nucleotidyltransferase</keyword>
<keyword id="KW-0651">Protein splicing</keyword>
<keyword id="KW-1185">Reference proteome</keyword>
<keyword id="KW-0804">Transcription</keyword>
<keyword id="KW-0808">Transferase</keyword>
<feature type="chain" id="PRO_0000453741" description="DNA-directed RNA polymerase subunit Rpo1C">
    <location>
        <begin position="1"/>
        <end position="859"/>
    </location>
</feature>
<feature type="chain" id="PRO_0000031065" description="DNA-directed RNA polymerase subunit Rpo1C, 1st part">
    <location>
        <begin position="1"/>
        <end position="75"/>
    </location>
</feature>
<feature type="chain" id="PRO_0000031066" description="Mja rpo1C intein">
    <location>
        <begin position="76"/>
        <end position="546"/>
    </location>
</feature>
<feature type="chain" id="PRO_0000031067" description="DNA-directed RNA polymerase subunit Rpo1C, 2nd part">
    <location>
        <begin position="547"/>
        <end position="859"/>
    </location>
</feature>
<sequence>MDMEALKQKIEGLDIPQSLKDELFEKLSKEKDLTEEMVDEIIDEVVNAYRKALVEPYEAVGIVAAQSIGEPGTQMSLPYEEKIIIKEGEFIKPVEIGKLVDEMIERFGFEKIGNSEVCDLPIDIYALSLDQDEKVHWKRIISCIRHKHNGKLIKIKTKSGREITATPYHSFVIRKDNKIIPVKGSELKIGDRIPVVKHIPANCVEAINISDYVSGNYVVDNINNKIAPKINGKSIPNNIKLDYDFGYFIGIYLAEGSVTKYFVSISNVDELILNKIRAFADKLGLNYGEYDNNNGFAESHDIRIYSSTLAEFLSNFGTSSNTKKIAEFVFGANKEFVRGLIRGYFDGDGNVNADRKVIRVTSNSKELIDGIAILLARFNIFSIKTKTKNQFVLIIPHRYAKKFHEEINFSVEKKKSELERLVSSLNDDKTYDSIDMIPSIGDALTKLGEKVDYPKVILKKFERKQKIGRATLQRHLRRIEELAVKKGVNILALKEYWLLKKAVESDVIWDEIVKIEEISCDKKYVYDISVEGLETFTTFDGVLTHNTMRTFHYAGVAEINVTLGLPRMIEIVDARKEPSTPIMTIYLKEEYKDNREKAEEIAKEIESLTLGSIAESISIDLWTQSIKVELDENRLADRGLTIDDVIEAIKKKLKVKIDVDGTTLYLKIKTPSIKALRKRIPKIKNIQLKGIPGIERVLVKKEGGEYVLYTQGSNLREVFKIDGVDTTRTITNNIIEIQEVLGIEAARNAIINEMRNTLEQQGLEVDIRHLMLVADIMTADGEVKPIGRHGVAGEKGSVLARAAFEETVKHLYAAAERGDVDKLKGVIENVIVGKPIYLGTGCVELTIDREYEEGKNMEE</sequence>
<organism>
    <name type="scientific">Methanocaldococcus jannaschii (strain ATCC 43067 / DSM 2661 / JAL-1 / JCM 10045 / NBRC 100440)</name>
    <name type="common">Methanococcus jannaschii</name>
    <dbReference type="NCBI Taxonomy" id="243232"/>
    <lineage>
        <taxon>Archaea</taxon>
        <taxon>Methanobacteriati</taxon>
        <taxon>Methanobacteriota</taxon>
        <taxon>Methanomada group</taxon>
        <taxon>Methanococci</taxon>
        <taxon>Methanococcales</taxon>
        <taxon>Methanocaldococcaceae</taxon>
        <taxon>Methanocaldococcus</taxon>
    </lineage>
</organism>
<proteinExistence type="inferred from homology"/>
<dbReference type="EC" id="2.7.7.6" evidence="1"/>
<dbReference type="EMBL" id="L77117">
    <property type="protein sequence ID" value="AAB99047.1"/>
    <property type="molecule type" value="Genomic_DNA"/>
</dbReference>
<dbReference type="PIR" id="B64430">
    <property type="entry name" value="B64430"/>
</dbReference>
<dbReference type="RefSeq" id="WP_010870556.1">
    <property type="nucleotide sequence ID" value="NC_000909.1"/>
</dbReference>
<dbReference type="SMR" id="Q58446"/>
<dbReference type="STRING" id="243232.MJ_1043"/>
<dbReference type="PaxDb" id="243232-MJ_1043"/>
<dbReference type="EnsemblBacteria" id="AAB99047">
    <property type="protein sequence ID" value="AAB99047"/>
    <property type="gene ID" value="MJ_1043"/>
</dbReference>
<dbReference type="GeneID" id="1451940"/>
<dbReference type="KEGG" id="mja:MJ_1043"/>
<dbReference type="eggNOG" id="arCOG03145">
    <property type="taxonomic scope" value="Archaea"/>
</dbReference>
<dbReference type="eggNOG" id="arCOG04256">
    <property type="taxonomic scope" value="Archaea"/>
</dbReference>
<dbReference type="HOGENOM" id="CLU_351851_0_0_2"/>
<dbReference type="InParanoid" id="Q58446"/>
<dbReference type="OrthoDB" id="372142at2157"/>
<dbReference type="PhylomeDB" id="Q58446"/>
<dbReference type="Proteomes" id="UP000000805">
    <property type="component" value="Chromosome"/>
</dbReference>
<dbReference type="GO" id="GO:0005737">
    <property type="term" value="C:cytoplasm"/>
    <property type="evidence" value="ECO:0007669"/>
    <property type="project" value="UniProtKB-SubCell"/>
</dbReference>
<dbReference type="GO" id="GO:0000428">
    <property type="term" value="C:DNA-directed RNA polymerase complex"/>
    <property type="evidence" value="ECO:0007669"/>
    <property type="project" value="UniProtKB-KW"/>
</dbReference>
<dbReference type="GO" id="GO:0003677">
    <property type="term" value="F:DNA binding"/>
    <property type="evidence" value="ECO:0007669"/>
    <property type="project" value="UniProtKB-UniRule"/>
</dbReference>
<dbReference type="GO" id="GO:0003899">
    <property type="term" value="F:DNA-directed RNA polymerase activity"/>
    <property type="evidence" value="ECO:0007669"/>
    <property type="project" value="UniProtKB-UniRule"/>
</dbReference>
<dbReference type="GO" id="GO:0004519">
    <property type="term" value="F:endonuclease activity"/>
    <property type="evidence" value="ECO:0007669"/>
    <property type="project" value="UniProtKB-KW"/>
</dbReference>
<dbReference type="GO" id="GO:0006351">
    <property type="term" value="P:DNA-templated transcription"/>
    <property type="evidence" value="ECO:0007669"/>
    <property type="project" value="UniProtKB-UniRule"/>
</dbReference>
<dbReference type="GO" id="GO:0016539">
    <property type="term" value="P:intein-mediated protein splicing"/>
    <property type="evidence" value="ECO:0007669"/>
    <property type="project" value="InterPro"/>
</dbReference>
<dbReference type="GO" id="GO:0006314">
    <property type="term" value="P:intron homing"/>
    <property type="evidence" value="ECO:0007669"/>
    <property type="project" value="UniProtKB-KW"/>
</dbReference>
<dbReference type="CDD" id="cd00081">
    <property type="entry name" value="Hint"/>
    <property type="match status" value="1"/>
</dbReference>
<dbReference type="CDD" id="cd06528">
    <property type="entry name" value="RNAP_A"/>
    <property type="match status" value="1"/>
</dbReference>
<dbReference type="Gene3D" id="1.10.150.390">
    <property type="match status" value="1"/>
</dbReference>
<dbReference type="Gene3D" id="2.170.16.10">
    <property type="entry name" value="Hedgehog/Intein (Hint) domain"/>
    <property type="match status" value="2"/>
</dbReference>
<dbReference type="Gene3D" id="3.10.28.10">
    <property type="entry name" value="Homing endonucleases"/>
    <property type="match status" value="1"/>
</dbReference>
<dbReference type="HAMAP" id="MF_00411">
    <property type="entry name" value="RNApol_arch_Rpo1C"/>
    <property type="match status" value="1"/>
</dbReference>
<dbReference type="InterPro" id="IPR045867">
    <property type="entry name" value="DNA-dir_RpoC_beta_prime"/>
</dbReference>
<dbReference type="InterPro" id="IPR003586">
    <property type="entry name" value="Hint_dom_C"/>
</dbReference>
<dbReference type="InterPro" id="IPR003587">
    <property type="entry name" value="Hint_dom_N"/>
</dbReference>
<dbReference type="InterPro" id="IPR036844">
    <property type="entry name" value="Hint_dom_sf"/>
</dbReference>
<dbReference type="InterPro" id="IPR027434">
    <property type="entry name" value="Homing_endonucl"/>
</dbReference>
<dbReference type="InterPro" id="IPR006142">
    <property type="entry name" value="INTEIN"/>
</dbReference>
<dbReference type="InterPro" id="IPR030934">
    <property type="entry name" value="Intein_C"/>
</dbReference>
<dbReference type="InterPro" id="IPR004042">
    <property type="entry name" value="Intein_endonuc_central"/>
</dbReference>
<dbReference type="InterPro" id="IPR006141">
    <property type="entry name" value="Intein_N"/>
</dbReference>
<dbReference type="InterPro" id="IPR004860">
    <property type="entry name" value="LAGLIDADG_dom"/>
</dbReference>
<dbReference type="InterPro" id="IPR007081">
    <property type="entry name" value="RNA_pol_Rpb1_5"/>
</dbReference>
<dbReference type="InterPro" id="IPR012757">
    <property type="entry name" value="RPO1C"/>
</dbReference>
<dbReference type="NCBIfam" id="TIGR01443">
    <property type="entry name" value="intein_Cterm"/>
    <property type="match status" value="1"/>
</dbReference>
<dbReference type="NCBIfam" id="TIGR01445">
    <property type="entry name" value="intein_Nterm"/>
    <property type="match status" value="1"/>
</dbReference>
<dbReference type="NCBIfam" id="NF011491">
    <property type="entry name" value="PRK14898.1"/>
    <property type="match status" value="1"/>
</dbReference>
<dbReference type="NCBIfam" id="TIGR02389">
    <property type="entry name" value="RNA_pol_rpoA2"/>
    <property type="match status" value="1"/>
</dbReference>
<dbReference type="PANTHER" id="PTHR19376">
    <property type="entry name" value="DNA-DIRECTED RNA POLYMERASE"/>
    <property type="match status" value="1"/>
</dbReference>
<dbReference type="PANTHER" id="PTHR19376:SF32">
    <property type="entry name" value="DNA-DIRECTED RNA POLYMERASE III SUBUNIT RPC1"/>
    <property type="match status" value="1"/>
</dbReference>
<dbReference type="Pfam" id="PF14890">
    <property type="entry name" value="Intein_splicing"/>
    <property type="match status" value="1"/>
</dbReference>
<dbReference type="Pfam" id="PF14528">
    <property type="entry name" value="LAGLIDADG_3"/>
    <property type="match status" value="2"/>
</dbReference>
<dbReference type="Pfam" id="PF04998">
    <property type="entry name" value="RNA_pol_Rpb1_5"/>
    <property type="match status" value="2"/>
</dbReference>
<dbReference type="PRINTS" id="PR00379">
    <property type="entry name" value="INTEIN"/>
</dbReference>
<dbReference type="SMART" id="SM00305">
    <property type="entry name" value="HintC"/>
    <property type="match status" value="1"/>
</dbReference>
<dbReference type="SMART" id="SM00306">
    <property type="entry name" value="HintN"/>
    <property type="match status" value="1"/>
</dbReference>
<dbReference type="SUPFAM" id="SSF64484">
    <property type="entry name" value="beta and beta-prime subunits of DNA dependent RNA-polymerase"/>
    <property type="match status" value="2"/>
</dbReference>
<dbReference type="SUPFAM" id="SSF51294">
    <property type="entry name" value="Hedgehog/intein (Hint) domain"/>
    <property type="match status" value="1"/>
</dbReference>
<dbReference type="SUPFAM" id="SSF55608">
    <property type="entry name" value="Homing endonucleases"/>
    <property type="match status" value="1"/>
</dbReference>
<dbReference type="PROSITE" id="PS50818">
    <property type="entry name" value="INTEIN_C_TER"/>
    <property type="match status" value="1"/>
</dbReference>
<dbReference type="PROSITE" id="PS50819">
    <property type="entry name" value="INTEIN_ENDONUCLEASE"/>
    <property type="match status" value="1"/>
</dbReference>
<dbReference type="PROSITE" id="PS50817">
    <property type="entry name" value="INTEIN_N_TER"/>
    <property type="match status" value="1"/>
</dbReference>
<gene>
    <name evidence="1" type="primary">rpo1C</name>
    <name evidence="1" type="synonym">rpoA2</name>
    <name type="ordered locus">MJ1043</name>
</gene>
<comment type="function">
    <text evidence="1">DNA-dependent RNA polymerase (RNAP) catalyzes the transcription of DNA into RNA using the four ribonucleoside triphosphates as substrates. Forms part of the jaw domain.</text>
</comment>
<comment type="catalytic activity">
    <reaction evidence="1">
        <text>RNA(n) + a ribonucleoside 5'-triphosphate = RNA(n+1) + diphosphate</text>
        <dbReference type="Rhea" id="RHEA:21248"/>
        <dbReference type="Rhea" id="RHEA-COMP:14527"/>
        <dbReference type="Rhea" id="RHEA-COMP:17342"/>
        <dbReference type="ChEBI" id="CHEBI:33019"/>
        <dbReference type="ChEBI" id="CHEBI:61557"/>
        <dbReference type="ChEBI" id="CHEBI:140395"/>
        <dbReference type="EC" id="2.7.7.6"/>
    </reaction>
</comment>
<comment type="subunit">
    <text evidence="1">Part of the RNA polymerase complex.</text>
</comment>
<comment type="subcellular location">
    <subcellularLocation>
        <location evidence="1">Cytoplasm</location>
    </subcellularLocation>
</comment>
<comment type="PTM">
    <text evidence="2">This protein undergoes a protein self splicing that involves a post-translational excision of the intervening region (intein) followed by peptide ligation.</text>
</comment>
<comment type="similarity">
    <text evidence="1">Belongs to the RNA polymerase beta' chain family.</text>
</comment>
<reference key="1">
    <citation type="journal article" date="1996" name="Science">
        <title>Complete genome sequence of the methanogenic archaeon, Methanococcus jannaschii.</title>
        <authorList>
            <person name="Bult C.J."/>
            <person name="White O."/>
            <person name="Olsen G.J."/>
            <person name="Zhou L."/>
            <person name="Fleischmann R.D."/>
            <person name="Sutton G.G."/>
            <person name="Blake J.A."/>
            <person name="FitzGerald L.M."/>
            <person name="Clayton R.A."/>
            <person name="Gocayne J.D."/>
            <person name="Kerlavage A.R."/>
            <person name="Dougherty B.A."/>
            <person name="Tomb J.-F."/>
            <person name="Adams M.D."/>
            <person name="Reich C.I."/>
            <person name="Overbeek R."/>
            <person name="Kirkness E.F."/>
            <person name="Weinstock K.G."/>
            <person name="Merrick J.M."/>
            <person name="Glodek A."/>
            <person name="Scott J.L."/>
            <person name="Geoghagen N.S.M."/>
            <person name="Weidman J.F."/>
            <person name="Fuhrmann J.L."/>
            <person name="Nguyen D."/>
            <person name="Utterback T.R."/>
            <person name="Kelley J.M."/>
            <person name="Peterson J.D."/>
            <person name="Sadow P.W."/>
            <person name="Hanna M.C."/>
            <person name="Cotton M.D."/>
            <person name="Roberts K.M."/>
            <person name="Hurst M.A."/>
            <person name="Kaine B.P."/>
            <person name="Borodovsky M."/>
            <person name="Klenk H.-P."/>
            <person name="Fraser C.M."/>
            <person name="Smith H.O."/>
            <person name="Woese C.R."/>
            <person name="Venter J.C."/>
        </authorList>
    </citation>
    <scope>NUCLEOTIDE SEQUENCE [LARGE SCALE GENOMIC DNA]</scope>
    <source>
        <strain>ATCC 43067 / DSM 2661 / JAL-1 / JCM 10045 / NBRC 100440</strain>
    </source>
</reference>
<name>RPO1C_METJA</name>
<evidence type="ECO:0000255" key="1">
    <source>
        <dbReference type="HAMAP-Rule" id="MF_00411"/>
    </source>
</evidence>
<evidence type="ECO:0000305" key="2"/>